<sequence length="193" mass="21918">MRGRDEDTGEFRGASRSQQRREALEIFDLGEKLVALTPAQLAKLPVPESLIPHIEESKRITSHIAHKRQLAFLAKHMRREDDETLAAIRDALDANSDTARREVAAIHRVERWRERLLADGDAALAELLEAYPAADRQQLRQLVRNAIHERAKNKPPRAYRELFQVLRDLSQEQGLESGDSGLEDGESALEDDE</sequence>
<feature type="chain" id="PRO_1000198405" description="Dual-action ribosomal maturation protein DarP">
    <location>
        <begin position="1"/>
        <end position="193"/>
    </location>
</feature>
<feature type="region of interest" description="Disordered" evidence="2">
    <location>
        <begin position="1"/>
        <end position="20"/>
    </location>
</feature>
<feature type="region of interest" description="Disordered" evidence="2">
    <location>
        <begin position="171"/>
        <end position="193"/>
    </location>
</feature>
<feature type="compositionally biased region" description="Basic and acidic residues" evidence="2">
    <location>
        <begin position="1"/>
        <end position="10"/>
    </location>
</feature>
<feature type="compositionally biased region" description="Acidic residues" evidence="2">
    <location>
        <begin position="181"/>
        <end position="193"/>
    </location>
</feature>
<gene>
    <name evidence="1" type="primary">darP</name>
    <name type="ordered locus">PXO_01892</name>
</gene>
<keyword id="KW-0963">Cytoplasm</keyword>
<keyword id="KW-0690">Ribosome biogenesis</keyword>
<keyword id="KW-0694">RNA-binding</keyword>
<keyword id="KW-0699">rRNA-binding</keyword>
<reference key="1">
    <citation type="journal article" date="2008" name="BMC Genomics">
        <title>Genome sequence and rapid evolution of the rice pathogen Xanthomonas oryzae pv. oryzae PXO99A.</title>
        <authorList>
            <person name="Salzberg S.L."/>
            <person name="Sommer D.D."/>
            <person name="Schatz M.C."/>
            <person name="Phillippy A.M."/>
            <person name="Rabinowicz P.D."/>
            <person name="Tsuge S."/>
            <person name="Furutani A."/>
            <person name="Ochiai H."/>
            <person name="Delcher A.L."/>
            <person name="Kelley D."/>
            <person name="Madupu R."/>
            <person name="Puiu D."/>
            <person name="Radune D."/>
            <person name="Shumway M."/>
            <person name="Trapnell C."/>
            <person name="Aparna G."/>
            <person name="Jha G."/>
            <person name="Pandey A."/>
            <person name="Patil P.B."/>
            <person name="Ishihara H."/>
            <person name="Meyer D.F."/>
            <person name="Szurek B."/>
            <person name="Verdier V."/>
            <person name="Koebnik R."/>
            <person name="Dow J.M."/>
            <person name="Ryan R.P."/>
            <person name="Hirata H."/>
            <person name="Tsuyumu S."/>
            <person name="Won Lee S."/>
            <person name="Seo Y.-S."/>
            <person name="Sriariyanum M."/>
            <person name="Ronald P.C."/>
            <person name="Sonti R.V."/>
            <person name="Van Sluys M.-A."/>
            <person name="Leach J.E."/>
            <person name="White F.F."/>
            <person name="Bogdanove A.J."/>
        </authorList>
    </citation>
    <scope>NUCLEOTIDE SEQUENCE [LARGE SCALE GENOMIC DNA]</scope>
    <source>
        <strain>PXO99A</strain>
    </source>
</reference>
<protein>
    <recommendedName>
        <fullName evidence="1">Dual-action ribosomal maturation protein DarP</fullName>
    </recommendedName>
    <alternativeName>
        <fullName evidence="1">Large ribosomal subunit assembly factor DarP</fullName>
    </alternativeName>
</protein>
<comment type="function">
    <text evidence="1">Member of a network of 50S ribosomal subunit biogenesis factors which assembles along the 30S-50S interface, preventing incorrect 23S rRNA structures from forming. Promotes peptidyl transferase center (PTC) maturation.</text>
</comment>
<comment type="subcellular location">
    <subcellularLocation>
        <location evidence="1">Cytoplasm</location>
    </subcellularLocation>
    <text evidence="1">Associates with late stage pre-50S ribosomal subunits.</text>
</comment>
<comment type="similarity">
    <text evidence="1">Belongs to the DarP family.</text>
</comment>
<evidence type="ECO:0000255" key="1">
    <source>
        <dbReference type="HAMAP-Rule" id="MF_00765"/>
    </source>
</evidence>
<evidence type="ECO:0000256" key="2">
    <source>
        <dbReference type="SAM" id="MobiDB-lite"/>
    </source>
</evidence>
<proteinExistence type="inferred from homology"/>
<organism>
    <name type="scientific">Xanthomonas oryzae pv. oryzae (strain PXO99A)</name>
    <dbReference type="NCBI Taxonomy" id="360094"/>
    <lineage>
        <taxon>Bacteria</taxon>
        <taxon>Pseudomonadati</taxon>
        <taxon>Pseudomonadota</taxon>
        <taxon>Gammaproteobacteria</taxon>
        <taxon>Lysobacterales</taxon>
        <taxon>Lysobacteraceae</taxon>
        <taxon>Xanthomonas</taxon>
    </lineage>
</organism>
<dbReference type="EMBL" id="CP000967">
    <property type="protein sequence ID" value="ACD60165.1"/>
    <property type="molecule type" value="Genomic_DNA"/>
</dbReference>
<dbReference type="SMR" id="B2SWF4"/>
<dbReference type="KEGG" id="xop:PXO_01892"/>
<dbReference type="eggNOG" id="COG3028">
    <property type="taxonomic scope" value="Bacteria"/>
</dbReference>
<dbReference type="HOGENOM" id="CLU_106757_0_0_6"/>
<dbReference type="Proteomes" id="UP000001740">
    <property type="component" value="Chromosome"/>
</dbReference>
<dbReference type="GO" id="GO:0005829">
    <property type="term" value="C:cytosol"/>
    <property type="evidence" value="ECO:0007669"/>
    <property type="project" value="TreeGrafter"/>
</dbReference>
<dbReference type="GO" id="GO:0043022">
    <property type="term" value="F:ribosome binding"/>
    <property type="evidence" value="ECO:0007669"/>
    <property type="project" value="UniProtKB-UniRule"/>
</dbReference>
<dbReference type="GO" id="GO:0019843">
    <property type="term" value="F:rRNA binding"/>
    <property type="evidence" value="ECO:0007669"/>
    <property type="project" value="UniProtKB-UniRule"/>
</dbReference>
<dbReference type="GO" id="GO:1902626">
    <property type="term" value="P:assembly of large subunit precursor of preribosome"/>
    <property type="evidence" value="ECO:0007669"/>
    <property type="project" value="UniProtKB-UniRule"/>
</dbReference>
<dbReference type="CDD" id="cd16331">
    <property type="entry name" value="YjgA-like"/>
    <property type="match status" value="1"/>
</dbReference>
<dbReference type="FunFam" id="1.10.60.30:FF:000002">
    <property type="entry name" value="UPF0307 protein YjgA"/>
    <property type="match status" value="1"/>
</dbReference>
<dbReference type="Gene3D" id="1.10.60.30">
    <property type="entry name" value="PSPTO4464-like domains"/>
    <property type="match status" value="2"/>
</dbReference>
<dbReference type="HAMAP" id="MF_00765">
    <property type="entry name" value="DarP"/>
    <property type="match status" value="1"/>
</dbReference>
<dbReference type="InterPro" id="IPR006839">
    <property type="entry name" value="DarP"/>
</dbReference>
<dbReference type="InterPro" id="IPR023153">
    <property type="entry name" value="DarP_sf"/>
</dbReference>
<dbReference type="NCBIfam" id="NF003593">
    <property type="entry name" value="PRK05255.1-1"/>
    <property type="match status" value="1"/>
</dbReference>
<dbReference type="PANTHER" id="PTHR38101">
    <property type="entry name" value="UPF0307 PROTEIN YJGA"/>
    <property type="match status" value="1"/>
</dbReference>
<dbReference type="PANTHER" id="PTHR38101:SF1">
    <property type="entry name" value="UPF0307 PROTEIN YJGA"/>
    <property type="match status" value="1"/>
</dbReference>
<dbReference type="Pfam" id="PF04751">
    <property type="entry name" value="DarP"/>
    <property type="match status" value="1"/>
</dbReference>
<dbReference type="PIRSF" id="PIRSF016183">
    <property type="entry name" value="UCP016183"/>
    <property type="match status" value="1"/>
</dbReference>
<dbReference type="SUPFAM" id="SSF158710">
    <property type="entry name" value="PSPTO4464-like"/>
    <property type="match status" value="1"/>
</dbReference>
<name>DARP_XANOP</name>
<accession>B2SWF4</accession>